<proteinExistence type="evidence at protein level"/>
<sequence>MLEKVVIANRGEIALRILRACKELGIKTVAVHSTADRDLKHVLLADETICIGPAPSAKSYLNIPAIIAAAEVTGADAIHPGYGFLSENADFAEQVERSGFTFIGPTADVIRLMGDKVSAIKAMKKAGVPCVPGSDGPVSNDIAKNKEIAKRIGYPIIIKASGGGGGRGMRVVRSEDALEESIAMTKAEAKAAFNNDMVYMEKYLENPRHVEIQVLADTHGNAVYLAERDCSMQRRHQKVVEEAPAPGITEEVRRDIGSRCANACVEIGYRGAGTFEFLYENGEFYFIEMNTRIQVEHPVTEMITGVDLVKEQLRIAAGLPISFKQEDIKVKGHAMECRINAEDPKTFLPSPGKVNHLHSPGGLGVRWDSHVYGGYTVPPHYDSMIAKLITYGDTREVAIRRMQNALSETIIDGIKTNIPLHELILEDENFQKGGTNIHYLEKKLGMNE</sequence>
<reference key="1">
    <citation type="journal article" date="1995" name="Science">
        <title>Whole-genome random sequencing and assembly of Haemophilus influenzae Rd.</title>
        <authorList>
            <person name="Fleischmann R.D."/>
            <person name="Adams M.D."/>
            <person name="White O."/>
            <person name="Clayton R.A."/>
            <person name="Kirkness E.F."/>
            <person name="Kerlavage A.R."/>
            <person name="Bult C.J."/>
            <person name="Tomb J.-F."/>
            <person name="Dougherty B.A."/>
            <person name="Merrick J.M."/>
            <person name="McKenney K."/>
            <person name="Sutton G.G."/>
            <person name="FitzHugh W."/>
            <person name="Fields C.A."/>
            <person name="Gocayne J.D."/>
            <person name="Scott J.D."/>
            <person name="Shirley R."/>
            <person name="Liu L.-I."/>
            <person name="Glodek A."/>
            <person name="Kelley J.M."/>
            <person name="Weidman J.F."/>
            <person name="Phillips C.A."/>
            <person name="Spriggs T."/>
            <person name="Hedblom E."/>
            <person name="Cotton M.D."/>
            <person name="Utterback T.R."/>
            <person name="Hanna M.C."/>
            <person name="Nguyen D.T."/>
            <person name="Saudek D.M."/>
            <person name="Brandon R.C."/>
            <person name="Fine L.D."/>
            <person name="Fritchman J.L."/>
            <person name="Fuhrmann J.L."/>
            <person name="Geoghagen N.S.M."/>
            <person name="Gnehm C.L."/>
            <person name="McDonald L.A."/>
            <person name="Small K.V."/>
            <person name="Fraser C.M."/>
            <person name="Smith H.O."/>
            <person name="Venter J.C."/>
        </authorList>
    </citation>
    <scope>NUCLEOTIDE SEQUENCE [LARGE SCALE GENOMIC DNA]</scope>
    <source>
        <strain>ATCC 51907 / DSM 11121 / KW20 / Rd</strain>
    </source>
</reference>
<reference evidence="5 6 7 8 9 10 11 12" key="2">
    <citation type="journal article" date="2015" name="Biochemistry">
        <title>Structural Analysis of Substrate, Reaction Intermediate, and Product Binding in Haemophilus influenzae Biotin Carboxylase.</title>
        <authorList>
            <person name="Broussard T.C."/>
            <person name="Pakhomova S."/>
            <person name="Neau D.B."/>
            <person name="Bonnot R."/>
            <person name="Waldrop G.L."/>
        </authorList>
    </citation>
    <scope>X-RAY CRYSTALLOGRAPHY (1.61 ANGSTROMS) IN COMPLEX WITH ADP; ATP ANALOGS AND MAGNESIUM</scope>
</reference>
<organism>
    <name type="scientific">Haemophilus influenzae (strain ATCC 51907 / DSM 11121 / KW20 / Rd)</name>
    <dbReference type="NCBI Taxonomy" id="71421"/>
    <lineage>
        <taxon>Bacteria</taxon>
        <taxon>Pseudomonadati</taxon>
        <taxon>Pseudomonadota</taxon>
        <taxon>Gammaproteobacteria</taxon>
        <taxon>Pasteurellales</taxon>
        <taxon>Pasteurellaceae</taxon>
        <taxon>Haemophilus</taxon>
    </lineage>
</organism>
<accession>P43873</accession>
<comment type="function">
    <text evidence="1">This protein is a component of the acetyl coenzyme A carboxylase complex; first, biotin carboxylase catalyzes the carboxylation of the carrier protein and then the transcarboxylase transfers the carboxyl group to form malonyl-CoA.</text>
</comment>
<comment type="catalytic activity">
    <reaction evidence="1">
        <text>N(6)-biotinyl-L-lysyl-[protein] + hydrogencarbonate + ATP = N(6)-carboxybiotinyl-L-lysyl-[protein] + ADP + phosphate + H(+)</text>
        <dbReference type="Rhea" id="RHEA:13501"/>
        <dbReference type="Rhea" id="RHEA-COMP:10505"/>
        <dbReference type="Rhea" id="RHEA-COMP:10506"/>
        <dbReference type="ChEBI" id="CHEBI:15378"/>
        <dbReference type="ChEBI" id="CHEBI:17544"/>
        <dbReference type="ChEBI" id="CHEBI:30616"/>
        <dbReference type="ChEBI" id="CHEBI:43474"/>
        <dbReference type="ChEBI" id="CHEBI:83144"/>
        <dbReference type="ChEBI" id="CHEBI:83145"/>
        <dbReference type="ChEBI" id="CHEBI:456216"/>
        <dbReference type="EC" id="6.3.4.14"/>
    </reaction>
</comment>
<comment type="cofactor">
    <cofactor evidence="2">
        <name>Mg(2+)</name>
        <dbReference type="ChEBI" id="CHEBI:18420"/>
    </cofactor>
    <cofactor evidence="2">
        <name>Mn(2+)</name>
        <dbReference type="ChEBI" id="CHEBI:29035"/>
    </cofactor>
    <text evidence="2">Binds 2 magnesium or manganese ions per subunit.</text>
</comment>
<comment type="pathway">
    <text evidence="1">Lipid metabolism; malonyl-CoA biosynthesis; malonyl-CoA from acetyl-CoA: step 1/1.</text>
</comment>
<comment type="subunit">
    <text evidence="1">Acetyl-CoA carboxylase is a heterohexamer of biotin carboxyl carrier protein, biotin carboxylase and the two subunits of carboxyl transferase in a 2:2 complex.</text>
</comment>
<dbReference type="EC" id="6.3.4.14" evidence="1"/>
<dbReference type="EMBL" id="L42023">
    <property type="protein sequence ID" value="AAC22632.1"/>
    <property type="molecule type" value="Genomic_DNA"/>
</dbReference>
<dbReference type="PIR" id="F64105">
    <property type="entry name" value="F64105"/>
</dbReference>
<dbReference type="RefSeq" id="NP_439133.1">
    <property type="nucleotide sequence ID" value="NC_000907.1"/>
</dbReference>
<dbReference type="PDB" id="4MV1">
    <property type="method" value="X-ray"/>
    <property type="resolution" value="1.91 A"/>
    <property type="chains" value="A=1-448"/>
</dbReference>
<dbReference type="PDB" id="4MV3">
    <property type="method" value="X-ray"/>
    <property type="resolution" value="1.69 A"/>
    <property type="chains" value="A=1-448"/>
</dbReference>
<dbReference type="PDB" id="4MV4">
    <property type="method" value="X-ray"/>
    <property type="resolution" value="1.61 A"/>
    <property type="chains" value="A=1-448"/>
</dbReference>
<dbReference type="PDB" id="4MV6">
    <property type="method" value="X-ray"/>
    <property type="resolution" value="1.77 A"/>
    <property type="chains" value="A=1-448"/>
</dbReference>
<dbReference type="PDB" id="4MV7">
    <property type="method" value="X-ray"/>
    <property type="resolution" value="1.73 A"/>
    <property type="chains" value="A=1-448"/>
</dbReference>
<dbReference type="PDB" id="4MV8">
    <property type="method" value="X-ray"/>
    <property type="resolution" value="2.06 A"/>
    <property type="chains" value="A=1-448"/>
</dbReference>
<dbReference type="PDB" id="4MV9">
    <property type="method" value="X-ray"/>
    <property type="resolution" value="1.98 A"/>
    <property type="chains" value="A=1-448"/>
</dbReference>
<dbReference type="PDB" id="4RZQ">
    <property type="method" value="X-ray"/>
    <property type="resolution" value="1.98 A"/>
    <property type="chains" value="A=1-448"/>
</dbReference>
<dbReference type="PDB" id="6OI8">
    <property type="method" value="X-ray"/>
    <property type="resolution" value="2.50 A"/>
    <property type="chains" value="A=1-448"/>
</dbReference>
<dbReference type="PDB" id="6OJH">
    <property type="method" value="X-ray"/>
    <property type="resolution" value="2.05 A"/>
    <property type="chains" value="A=1-448"/>
</dbReference>
<dbReference type="PDBsum" id="4MV1"/>
<dbReference type="PDBsum" id="4MV3"/>
<dbReference type="PDBsum" id="4MV4"/>
<dbReference type="PDBsum" id="4MV6"/>
<dbReference type="PDBsum" id="4MV7"/>
<dbReference type="PDBsum" id="4MV8"/>
<dbReference type="PDBsum" id="4MV9"/>
<dbReference type="PDBsum" id="4RZQ"/>
<dbReference type="PDBsum" id="6OI8"/>
<dbReference type="PDBsum" id="6OJH"/>
<dbReference type="SMR" id="P43873"/>
<dbReference type="STRING" id="71421.HI_0972"/>
<dbReference type="EnsemblBacteria" id="AAC22632">
    <property type="protein sequence ID" value="AAC22632"/>
    <property type="gene ID" value="HI_0972"/>
</dbReference>
<dbReference type="KEGG" id="hin:HI_0972"/>
<dbReference type="PATRIC" id="fig|71421.8.peg.1013"/>
<dbReference type="eggNOG" id="COG0439">
    <property type="taxonomic scope" value="Bacteria"/>
</dbReference>
<dbReference type="HOGENOM" id="CLU_000395_3_2_6"/>
<dbReference type="OrthoDB" id="9763189at2"/>
<dbReference type="PhylomeDB" id="P43873"/>
<dbReference type="BioCyc" id="HINF71421:G1GJ1-1013-MONOMER"/>
<dbReference type="BRENDA" id="6.3.4.14">
    <property type="organism ID" value="2529"/>
</dbReference>
<dbReference type="UniPathway" id="UPA00655">
    <property type="reaction ID" value="UER00711"/>
</dbReference>
<dbReference type="EvolutionaryTrace" id="P43873"/>
<dbReference type="Proteomes" id="UP000000579">
    <property type="component" value="Chromosome"/>
</dbReference>
<dbReference type="GO" id="GO:0003989">
    <property type="term" value="F:acetyl-CoA carboxylase activity"/>
    <property type="evidence" value="ECO:0007669"/>
    <property type="project" value="UniProtKB-EC"/>
</dbReference>
<dbReference type="GO" id="GO:0005524">
    <property type="term" value="F:ATP binding"/>
    <property type="evidence" value="ECO:0007669"/>
    <property type="project" value="UniProtKB-KW"/>
</dbReference>
<dbReference type="GO" id="GO:0004075">
    <property type="term" value="F:biotin carboxylase activity"/>
    <property type="evidence" value="ECO:0007669"/>
    <property type="project" value="UniProtKB-EC"/>
</dbReference>
<dbReference type="GO" id="GO:0046872">
    <property type="term" value="F:metal ion binding"/>
    <property type="evidence" value="ECO:0007669"/>
    <property type="project" value="UniProtKB-KW"/>
</dbReference>
<dbReference type="GO" id="GO:0006633">
    <property type="term" value="P:fatty acid biosynthetic process"/>
    <property type="evidence" value="ECO:0007669"/>
    <property type="project" value="UniProtKB-KW"/>
</dbReference>
<dbReference type="GO" id="GO:2001295">
    <property type="term" value="P:malonyl-CoA biosynthetic process"/>
    <property type="evidence" value="ECO:0007669"/>
    <property type="project" value="UniProtKB-UniPathway"/>
</dbReference>
<dbReference type="FunFam" id="3.30.1490.20:FF:000018">
    <property type="entry name" value="Biotin carboxylase"/>
    <property type="match status" value="1"/>
</dbReference>
<dbReference type="FunFam" id="3.40.50.20:FF:000010">
    <property type="entry name" value="Propionyl-CoA carboxylase subunit alpha"/>
    <property type="match status" value="1"/>
</dbReference>
<dbReference type="Gene3D" id="3.40.50.20">
    <property type="match status" value="1"/>
</dbReference>
<dbReference type="Gene3D" id="3.30.1490.20">
    <property type="entry name" value="ATP-grasp fold, A domain"/>
    <property type="match status" value="1"/>
</dbReference>
<dbReference type="Gene3D" id="3.30.470.20">
    <property type="entry name" value="ATP-grasp fold, B domain"/>
    <property type="match status" value="1"/>
</dbReference>
<dbReference type="InterPro" id="IPR051602">
    <property type="entry name" value="ACC_Biotin_Carboxylase"/>
</dbReference>
<dbReference type="InterPro" id="IPR004549">
    <property type="entry name" value="Acetyl_CoA_COase_biotin_COase"/>
</dbReference>
<dbReference type="InterPro" id="IPR011761">
    <property type="entry name" value="ATP-grasp"/>
</dbReference>
<dbReference type="InterPro" id="IPR013815">
    <property type="entry name" value="ATP_grasp_subdomain_1"/>
</dbReference>
<dbReference type="InterPro" id="IPR005481">
    <property type="entry name" value="BC-like_N"/>
</dbReference>
<dbReference type="InterPro" id="IPR011764">
    <property type="entry name" value="Biotin_carboxylation_dom"/>
</dbReference>
<dbReference type="InterPro" id="IPR005482">
    <property type="entry name" value="Biotin_COase_C"/>
</dbReference>
<dbReference type="InterPro" id="IPR005479">
    <property type="entry name" value="CbamoylP_synth_lsu-like_ATP-bd"/>
</dbReference>
<dbReference type="InterPro" id="IPR016185">
    <property type="entry name" value="PreATP-grasp_dom_sf"/>
</dbReference>
<dbReference type="InterPro" id="IPR011054">
    <property type="entry name" value="Rudment_hybrid_motif"/>
</dbReference>
<dbReference type="NCBIfam" id="TIGR00514">
    <property type="entry name" value="accC"/>
    <property type="match status" value="1"/>
</dbReference>
<dbReference type="NCBIfam" id="NF006367">
    <property type="entry name" value="PRK08591.1"/>
    <property type="match status" value="1"/>
</dbReference>
<dbReference type="PANTHER" id="PTHR48095:SF2">
    <property type="entry name" value="BIOTIN CARBOXYLASE, CHLOROPLASTIC"/>
    <property type="match status" value="1"/>
</dbReference>
<dbReference type="PANTHER" id="PTHR48095">
    <property type="entry name" value="PYRUVATE CARBOXYLASE SUBUNIT A"/>
    <property type="match status" value="1"/>
</dbReference>
<dbReference type="Pfam" id="PF02785">
    <property type="entry name" value="Biotin_carb_C"/>
    <property type="match status" value="1"/>
</dbReference>
<dbReference type="Pfam" id="PF00289">
    <property type="entry name" value="Biotin_carb_N"/>
    <property type="match status" value="1"/>
</dbReference>
<dbReference type="Pfam" id="PF02786">
    <property type="entry name" value="CPSase_L_D2"/>
    <property type="match status" value="1"/>
</dbReference>
<dbReference type="SMART" id="SM00878">
    <property type="entry name" value="Biotin_carb_C"/>
    <property type="match status" value="1"/>
</dbReference>
<dbReference type="SUPFAM" id="SSF56059">
    <property type="entry name" value="Glutathione synthetase ATP-binding domain-like"/>
    <property type="match status" value="1"/>
</dbReference>
<dbReference type="SUPFAM" id="SSF52440">
    <property type="entry name" value="PreATP-grasp domain"/>
    <property type="match status" value="1"/>
</dbReference>
<dbReference type="SUPFAM" id="SSF51246">
    <property type="entry name" value="Rudiment single hybrid motif"/>
    <property type="match status" value="1"/>
</dbReference>
<dbReference type="PROSITE" id="PS50975">
    <property type="entry name" value="ATP_GRASP"/>
    <property type="match status" value="1"/>
</dbReference>
<dbReference type="PROSITE" id="PS50979">
    <property type="entry name" value="BC"/>
    <property type="match status" value="1"/>
</dbReference>
<dbReference type="PROSITE" id="PS00866">
    <property type="entry name" value="CPSASE_1"/>
    <property type="match status" value="1"/>
</dbReference>
<dbReference type="PROSITE" id="PS00867">
    <property type="entry name" value="CPSASE_2"/>
    <property type="match status" value="1"/>
</dbReference>
<gene>
    <name type="primary">accC</name>
    <name type="ordered locus">HI_0972</name>
</gene>
<keyword id="KW-0002">3D-structure</keyword>
<keyword id="KW-0067">ATP-binding</keyword>
<keyword id="KW-0092">Biotin</keyword>
<keyword id="KW-0275">Fatty acid biosynthesis</keyword>
<keyword id="KW-0276">Fatty acid metabolism</keyword>
<keyword id="KW-0436">Ligase</keyword>
<keyword id="KW-0444">Lipid biosynthesis</keyword>
<keyword id="KW-0443">Lipid metabolism</keyword>
<keyword id="KW-0460">Magnesium</keyword>
<keyword id="KW-0464">Manganese</keyword>
<keyword id="KW-0479">Metal-binding</keyword>
<keyword id="KW-0547">Nucleotide-binding</keyword>
<keyword id="KW-1185">Reference proteome</keyword>
<name>ACCC_HAEIN</name>
<feature type="chain" id="PRO_0000146793" description="Biotin carboxylase">
    <location>
        <begin position="1"/>
        <end position="448"/>
    </location>
</feature>
<feature type="domain" description="Biotin carboxylation">
    <location>
        <begin position="1"/>
        <end position="445"/>
    </location>
</feature>
<feature type="domain" description="ATP-grasp" evidence="2">
    <location>
        <begin position="120"/>
        <end position="317"/>
    </location>
</feature>
<feature type="active site" evidence="1">
    <location>
        <position position="292"/>
    </location>
</feature>
<feature type="binding site" evidence="3 10">
    <location>
        <position position="116"/>
    </location>
    <ligand>
        <name>ATP</name>
        <dbReference type="ChEBI" id="CHEBI:30616"/>
    </ligand>
</feature>
<feature type="binding site" evidence="3 6 7">
    <location>
        <position position="159"/>
    </location>
    <ligand>
        <name>ATP</name>
        <dbReference type="ChEBI" id="CHEBI:30616"/>
    </ligand>
</feature>
<feature type="binding site" evidence="1">
    <location>
        <begin position="165"/>
        <end position="166"/>
    </location>
    <ligand>
        <name>ATP</name>
        <dbReference type="ChEBI" id="CHEBI:30616"/>
    </ligand>
</feature>
<feature type="binding site" evidence="3 5 6 7 10 12">
    <location>
        <begin position="201"/>
        <end position="204"/>
    </location>
    <ligand>
        <name>ATP</name>
        <dbReference type="ChEBI" id="CHEBI:30616"/>
    </ligand>
</feature>
<feature type="binding site" evidence="1">
    <location>
        <position position="209"/>
    </location>
    <ligand>
        <name>ATP</name>
        <dbReference type="ChEBI" id="CHEBI:30616"/>
    </ligand>
</feature>
<feature type="binding site" evidence="1">
    <location>
        <position position="236"/>
    </location>
    <ligand>
        <name>ATP</name>
        <dbReference type="ChEBI" id="CHEBI:30616"/>
    </ligand>
</feature>
<feature type="binding site" evidence="1">
    <location>
        <position position="238"/>
    </location>
    <ligand>
        <name>hydrogencarbonate</name>
        <dbReference type="ChEBI" id="CHEBI:17544"/>
    </ligand>
</feature>
<feature type="binding site" evidence="3 6 7">
    <location>
        <position position="276"/>
    </location>
    <ligand>
        <name>ATP</name>
        <dbReference type="ChEBI" id="CHEBI:30616"/>
    </ligand>
</feature>
<feature type="binding site" evidence="3 7">
    <location>
        <position position="276"/>
    </location>
    <ligand>
        <name>Mg(2+)</name>
        <dbReference type="ChEBI" id="CHEBI:18420"/>
        <label>1</label>
    </ligand>
</feature>
<feature type="binding site" evidence="2">
    <location>
        <position position="276"/>
    </location>
    <ligand>
        <name>Mn(2+)</name>
        <dbReference type="ChEBI" id="CHEBI:29035"/>
        <label>1</label>
    </ligand>
</feature>
<feature type="binding site" evidence="3 6 7">
    <location>
        <position position="288"/>
    </location>
    <ligand>
        <name>ATP</name>
        <dbReference type="ChEBI" id="CHEBI:30616"/>
    </ligand>
</feature>
<feature type="binding site" evidence="3 7">
    <location>
        <position position="288"/>
    </location>
    <ligand>
        <name>Mg(2+)</name>
        <dbReference type="ChEBI" id="CHEBI:18420"/>
        <label>1</label>
    </ligand>
</feature>
<feature type="binding site" evidence="2">
    <location>
        <position position="288"/>
    </location>
    <ligand>
        <name>Mg(2+)</name>
        <dbReference type="ChEBI" id="CHEBI:18420"/>
        <label>2</label>
    </ligand>
</feature>
<feature type="binding site" evidence="2">
    <location>
        <position position="288"/>
    </location>
    <ligand>
        <name>Mn(2+)</name>
        <dbReference type="ChEBI" id="CHEBI:29035"/>
        <label>1</label>
    </ligand>
</feature>
<feature type="binding site" evidence="2">
    <location>
        <position position="288"/>
    </location>
    <ligand>
        <name>Mn(2+)</name>
        <dbReference type="ChEBI" id="CHEBI:29035"/>
        <label>2</label>
    </ligand>
</feature>
<feature type="binding site" evidence="3 7">
    <location>
        <position position="290"/>
    </location>
    <ligand>
        <name>Mg(2+)</name>
        <dbReference type="ChEBI" id="CHEBI:18420"/>
        <label>2</label>
    </ligand>
</feature>
<feature type="binding site" evidence="2">
    <location>
        <position position="290"/>
    </location>
    <ligand>
        <name>Mn(2+)</name>
        <dbReference type="ChEBI" id="CHEBI:29035"/>
        <label>2</label>
    </ligand>
</feature>
<feature type="binding site" evidence="1">
    <location>
        <position position="292"/>
    </location>
    <ligand>
        <name>hydrogencarbonate</name>
        <dbReference type="ChEBI" id="CHEBI:17544"/>
    </ligand>
</feature>
<feature type="binding site" evidence="1">
    <location>
        <position position="295"/>
    </location>
    <ligand>
        <name>hydrogencarbonate</name>
        <dbReference type="ChEBI" id="CHEBI:17544"/>
    </ligand>
</feature>
<feature type="binding site" evidence="1">
    <location>
        <position position="338"/>
    </location>
    <ligand>
        <name>biotin</name>
        <dbReference type="ChEBI" id="CHEBI:57586"/>
    </ligand>
</feature>
<feature type="binding site" evidence="1">
    <location>
        <position position="338"/>
    </location>
    <ligand>
        <name>hydrogencarbonate</name>
        <dbReference type="ChEBI" id="CHEBI:17544"/>
    </ligand>
</feature>
<feature type="strand" evidence="13">
    <location>
        <begin position="4"/>
        <end position="7"/>
    </location>
</feature>
<feature type="helix" evidence="13">
    <location>
        <begin position="11"/>
        <end position="24"/>
    </location>
</feature>
<feature type="strand" evidence="13">
    <location>
        <begin position="27"/>
        <end position="33"/>
    </location>
</feature>
<feature type="helix" evidence="13">
    <location>
        <begin position="34"/>
        <end position="36"/>
    </location>
</feature>
<feature type="helix" evidence="13">
    <location>
        <begin position="40"/>
        <end position="44"/>
    </location>
</feature>
<feature type="strand" evidence="13">
    <location>
        <begin position="45"/>
        <end position="55"/>
    </location>
</feature>
<feature type="helix" evidence="13">
    <location>
        <begin position="56"/>
        <end position="58"/>
    </location>
</feature>
<feature type="turn" evidence="13">
    <location>
        <begin position="59"/>
        <end position="61"/>
    </location>
</feature>
<feature type="helix" evidence="13">
    <location>
        <begin position="63"/>
        <end position="73"/>
    </location>
</feature>
<feature type="strand" evidence="13">
    <location>
        <begin position="76"/>
        <end position="79"/>
    </location>
</feature>
<feature type="turn" evidence="13">
    <location>
        <begin position="84"/>
        <end position="87"/>
    </location>
</feature>
<feature type="helix" evidence="13">
    <location>
        <begin position="89"/>
        <end position="97"/>
    </location>
</feature>
<feature type="strand" evidence="13">
    <location>
        <begin position="101"/>
        <end position="104"/>
    </location>
</feature>
<feature type="helix" evidence="13">
    <location>
        <begin position="107"/>
        <end position="114"/>
    </location>
</feature>
<feature type="helix" evidence="13">
    <location>
        <begin position="116"/>
        <end position="126"/>
    </location>
</feature>
<feature type="helix" evidence="13">
    <location>
        <begin position="142"/>
        <end position="152"/>
    </location>
</feature>
<feature type="strand" evidence="13">
    <location>
        <begin position="154"/>
        <end position="160"/>
    </location>
</feature>
<feature type="strand" evidence="13">
    <location>
        <begin position="169"/>
        <end position="172"/>
    </location>
</feature>
<feature type="helix" evidence="13">
    <location>
        <begin position="175"/>
        <end position="192"/>
    </location>
</feature>
<feature type="strand" evidence="13">
    <location>
        <begin position="198"/>
        <end position="202"/>
    </location>
</feature>
<feature type="strand" evidence="13">
    <location>
        <begin position="208"/>
        <end position="216"/>
    </location>
</feature>
<feature type="strand" evidence="13">
    <location>
        <begin position="222"/>
        <end position="234"/>
    </location>
</feature>
<feature type="strand" evidence="13">
    <location>
        <begin position="237"/>
        <end position="244"/>
    </location>
</feature>
<feature type="helix" evidence="13">
    <location>
        <begin position="250"/>
        <end position="267"/>
    </location>
</feature>
<feature type="strand" evidence="13">
    <location>
        <begin position="271"/>
        <end position="280"/>
    </location>
</feature>
<feature type="strand" evidence="13">
    <location>
        <begin position="283"/>
        <end position="290"/>
    </location>
</feature>
<feature type="helix" evidence="13">
    <location>
        <begin position="297"/>
        <end position="304"/>
    </location>
</feature>
<feature type="helix" evidence="13">
    <location>
        <begin position="308"/>
        <end position="316"/>
    </location>
</feature>
<feature type="helix" evidence="13">
    <location>
        <begin position="325"/>
        <end position="327"/>
    </location>
</feature>
<feature type="strand" evidence="13">
    <location>
        <begin position="332"/>
        <end position="342"/>
    </location>
</feature>
<feature type="turn" evidence="13">
    <location>
        <begin position="344"/>
        <end position="346"/>
    </location>
</feature>
<feature type="strand" evidence="13">
    <location>
        <begin position="356"/>
        <end position="358"/>
    </location>
</feature>
<feature type="strand" evidence="13">
    <location>
        <begin position="365"/>
        <end position="368"/>
    </location>
</feature>
<feature type="strand" evidence="13">
    <location>
        <begin position="379"/>
        <end position="381"/>
    </location>
</feature>
<feature type="strand" evidence="13">
    <location>
        <begin position="384"/>
        <end position="394"/>
    </location>
</feature>
<feature type="helix" evidence="13">
    <location>
        <begin position="395"/>
        <end position="408"/>
    </location>
</feature>
<feature type="strand" evidence="13">
    <location>
        <begin position="410"/>
        <end position="414"/>
    </location>
</feature>
<feature type="helix" evidence="13">
    <location>
        <begin position="418"/>
        <end position="425"/>
    </location>
</feature>
<feature type="helix" evidence="13">
    <location>
        <begin position="428"/>
        <end position="432"/>
    </location>
</feature>
<feature type="helix" evidence="13">
    <location>
        <begin position="439"/>
        <end position="444"/>
    </location>
</feature>
<protein>
    <recommendedName>
        <fullName>Biotin carboxylase</fullName>
        <ecNumber evidence="1">6.3.4.14</ecNumber>
    </recommendedName>
    <alternativeName>
        <fullName evidence="4">Acetyl-coenzyme A carboxylase biotin carboxylase subunit A</fullName>
    </alternativeName>
</protein>
<evidence type="ECO:0000250" key="1">
    <source>
        <dbReference type="UniProtKB" id="P24182"/>
    </source>
</evidence>
<evidence type="ECO:0000255" key="2">
    <source>
        <dbReference type="PROSITE-ProRule" id="PRU00409"/>
    </source>
</evidence>
<evidence type="ECO:0000269" key="3">
    <source>
    </source>
</evidence>
<evidence type="ECO:0000305" key="4"/>
<evidence type="ECO:0007744" key="5">
    <source>
        <dbReference type="PDB" id="4MV1"/>
    </source>
</evidence>
<evidence type="ECO:0007744" key="6">
    <source>
        <dbReference type="PDB" id="4MV3"/>
    </source>
</evidence>
<evidence type="ECO:0007744" key="7">
    <source>
        <dbReference type="PDB" id="4MV4"/>
    </source>
</evidence>
<evidence type="ECO:0007744" key="8">
    <source>
        <dbReference type="PDB" id="4MV6"/>
    </source>
</evidence>
<evidence type="ECO:0007744" key="9">
    <source>
        <dbReference type="PDB" id="4MV7"/>
    </source>
</evidence>
<evidence type="ECO:0007744" key="10">
    <source>
        <dbReference type="PDB" id="4MV8"/>
    </source>
</evidence>
<evidence type="ECO:0007744" key="11">
    <source>
        <dbReference type="PDB" id="4MV9"/>
    </source>
</evidence>
<evidence type="ECO:0007744" key="12">
    <source>
        <dbReference type="PDB" id="4RZQ"/>
    </source>
</evidence>
<evidence type="ECO:0007829" key="13">
    <source>
        <dbReference type="PDB" id="4MV4"/>
    </source>
</evidence>